<name>RNY_BORAP</name>
<accession>Q0SN03</accession>
<accession>G0ISE7</accession>
<sequence length="509" mass="57919">MYIIFSSIFAGFILGFLIRVFLGRLSLLDLEKNLTKVRVESQLEIENERRQIIANAKSQMLKEKNQQDRDIRDRKNEIVNLEKRLLQREETLDKRISALDKQQSRVDFKIKEFEQKEKVIREKEADLVKRLENISGLTREDARKIVIEKVEHESRRDAQVIINKSEQEAQLLADKVAKDILVSTMQRIVTEVSSEFTVASVELPNDEMKGRIIGKEGRNIRALETLIGADIIIDDTPEAVVISCFDPIRKELAKRTLERLVTDGRIHPARIEEVVYNVTNEINSIIQEEGEKVVFDLNIHGLDKRLIRGLGRLYFRSSYGQNVLSHSKETAIIGEILAKEMKLDPIVVKRACLLHDIGKGMESISDNSEGHAITGAELAQSCGESEIVVNAIAAHHNEVKPESLEAIVVQIADAISASRPGARRESLNNYINRLKRLEDIAYSFEGVQKCYAIQAGREVRIIVDNALINDEKSILLARDIAKKIEAEMRYPGKIKVTIIRETRVIEYAR</sequence>
<gene>
    <name evidence="1" type="primary">rny</name>
    <name type="ordered locus">BAPKO_0532</name>
    <name type="ordered locus">BafPKo_0520</name>
</gene>
<reference key="1">
    <citation type="journal article" date="2006" name="BMC Genomics">
        <title>Comparative genome analysis: selection pressure on the Borrelia vls cassettes is essential for infectivity.</title>
        <authorList>
            <person name="Gloeckner G."/>
            <person name="Schulte-Spechtel U."/>
            <person name="Schilhabel M."/>
            <person name="Felder M."/>
            <person name="Suehnel J."/>
            <person name="Wilske B."/>
            <person name="Platzer M."/>
        </authorList>
    </citation>
    <scope>NUCLEOTIDE SEQUENCE [LARGE SCALE GENOMIC DNA]</scope>
    <source>
        <strain>PKo</strain>
    </source>
</reference>
<reference key="2">
    <citation type="journal article" date="2011" name="J. Bacteriol.">
        <title>Whole-genome sequences of two Borrelia afzelii and two Borrelia garinii Lyme disease agent isolates.</title>
        <authorList>
            <person name="Casjens S.R."/>
            <person name="Mongodin E.F."/>
            <person name="Qiu W.G."/>
            <person name="Dunn J.J."/>
            <person name="Luft B.J."/>
            <person name="Fraser-Liggett C.M."/>
            <person name="Schutzer S.E."/>
        </authorList>
    </citation>
    <scope>NUCLEOTIDE SEQUENCE [LARGE SCALE GENOMIC DNA]</scope>
    <source>
        <strain>PKo</strain>
    </source>
</reference>
<evidence type="ECO:0000255" key="1">
    <source>
        <dbReference type="HAMAP-Rule" id="MF_00335"/>
    </source>
</evidence>
<evidence type="ECO:0000255" key="2">
    <source>
        <dbReference type="PROSITE-ProRule" id="PRU01175"/>
    </source>
</evidence>
<evidence type="ECO:0000305" key="3"/>
<comment type="function">
    <text evidence="1">Endoribonuclease that initiates mRNA decay.</text>
</comment>
<comment type="subcellular location">
    <subcellularLocation>
        <location evidence="1">Cell membrane</location>
        <topology evidence="1">Single-pass membrane protein</topology>
    </subcellularLocation>
</comment>
<comment type="similarity">
    <text evidence="1">Belongs to the RNase Y family.</text>
</comment>
<comment type="sequence caution" evidence="3">
    <conflict type="erroneous initiation">
        <sequence resource="EMBL-CDS" id="AEL69728"/>
    </conflict>
    <text>Extended N-terminus.</text>
</comment>
<organism>
    <name type="scientific">Borreliella afzelii (strain PKo)</name>
    <name type="common">Borrelia afzelii</name>
    <dbReference type="NCBI Taxonomy" id="390236"/>
    <lineage>
        <taxon>Bacteria</taxon>
        <taxon>Pseudomonadati</taxon>
        <taxon>Spirochaetota</taxon>
        <taxon>Spirochaetia</taxon>
        <taxon>Spirochaetales</taxon>
        <taxon>Borreliaceae</taxon>
        <taxon>Borreliella</taxon>
    </lineage>
</organism>
<proteinExistence type="inferred from homology"/>
<protein>
    <recommendedName>
        <fullName evidence="1">Ribonuclease Y</fullName>
        <shortName evidence="1">RNase Y</shortName>
        <ecNumber evidence="1">3.1.-.-</ecNumber>
    </recommendedName>
</protein>
<dbReference type="EC" id="3.1.-.-" evidence="1"/>
<dbReference type="EMBL" id="CP000395">
    <property type="protein sequence ID" value="ABH01775.1"/>
    <property type="molecule type" value="Genomic_DNA"/>
</dbReference>
<dbReference type="EMBL" id="CP002933">
    <property type="protein sequence ID" value="AEL69728.1"/>
    <property type="status" value="ALT_INIT"/>
    <property type="molecule type" value="Genomic_DNA"/>
</dbReference>
<dbReference type="STRING" id="29518.BLA32_01740"/>
<dbReference type="KEGG" id="baf:BAPKO_0532"/>
<dbReference type="KEGG" id="bafz:BafPKo_0520"/>
<dbReference type="PATRIC" id="fig|390236.22.peg.501"/>
<dbReference type="eggNOG" id="COG1418">
    <property type="taxonomic scope" value="Bacteria"/>
</dbReference>
<dbReference type="HOGENOM" id="CLU_028328_1_0_12"/>
<dbReference type="Proteomes" id="UP000005216">
    <property type="component" value="Chromosome"/>
</dbReference>
<dbReference type="GO" id="GO:0005886">
    <property type="term" value="C:plasma membrane"/>
    <property type="evidence" value="ECO:0007669"/>
    <property type="project" value="UniProtKB-SubCell"/>
</dbReference>
<dbReference type="GO" id="GO:0003723">
    <property type="term" value="F:RNA binding"/>
    <property type="evidence" value="ECO:0007669"/>
    <property type="project" value="UniProtKB-UniRule"/>
</dbReference>
<dbReference type="GO" id="GO:0004521">
    <property type="term" value="F:RNA endonuclease activity"/>
    <property type="evidence" value="ECO:0007669"/>
    <property type="project" value="UniProtKB-UniRule"/>
</dbReference>
<dbReference type="GO" id="GO:0006402">
    <property type="term" value="P:mRNA catabolic process"/>
    <property type="evidence" value="ECO:0007669"/>
    <property type="project" value="UniProtKB-UniRule"/>
</dbReference>
<dbReference type="CDD" id="cd00077">
    <property type="entry name" value="HDc"/>
    <property type="match status" value="1"/>
</dbReference>
<dbReference type="CDD" id="cd22431">
    <property type="entry name" value="KH-I_RNaseY"/>
    <property type="match status" value="1"/>
</dbReference>
<dbReference type="Gene3D" id="3.30.310.210">
    <property type="match status" value="1"/>
</dbReference>
<dbReference type="Gene3D" id="1.10.3210.10">
    <property type="entry name" value="Hypothetical protein af1432"/>
    <property type="match status" value="1"/>
</dbReference>
<dbReference type="HAMAP" id="MF_00335">
    <property type="entry name" value="RNase_Y"/>
    <property type="match status" value="1"/>
</dbReference>
<dbReference type="InterPro" id="IPR003607">
    <property type="entry name" value="HD/PDEase_dom"/>
</dbReference>
<dbReference type="InterPro" id="IPR006674">
    <property type="entry name" value="HD_domain"/>
</dbReference>
<dbReference type="InterPro" id="IPR006675">
    <property type="entry name" value="HDIG_dom"/>
</dbReference>
<dbReference type="InterPro" id="IPR004087">
    <property type="entry name" value="KH_dom"/>
</dbReference>
<dbReference type="InterPro" id="IPR004088">
    <property type="entry name" value="KH_dom_type_1"/>
</dbReference>
<dbReference type="InterPro" id="IPR036612">
    <property type="entry name" value="KH_dom_type_1_sf"/>
</dbReference>
<dbReference type="InterPro" id="IPR017705">
    <property type="entry name" value="Ribonuclease_Y"/>
</dbReference>
<dbReference type="InterPro" id="IPR022711">
    <property type="entry name" value="RNase_Y_N"/>
</dbReference>
<dbReference type="NCBIfam" id="TIGR00277">
    <property type="entry name" value="HDIG"/>
    <property type="match status" value="1"/>
</dbReference>
<dbReference type="NCBIfam" id="TIGR03319">
    <property type="entry name" value="RNase_Y"/>
    <property type="match status" value="1"/>
</dbReference>
<dbReference type="PANTHER" id="PTHR12826">
    <property type="entry name" value="RIBONUCLEASE Y"/>
    <property type="match status" value="1"/>
</dbReference>
<dbReference type="PANTHER" id="PTHR12826:SF15">
    <property type="entry name" value="RIBONUCLEASE Y"/>
    <property type="match status" value="1"/>
</dbReference>
<dbReference type="Pfam" id="PF01966">
    <property type="entry name" value="HD"/>
    <property type="match status" value="1"/>
</dbReference>
<dbReference type="Pfam" id="PF00013">
    <property type="entry name" value="KH_1"/>
    <property type="match status" value="1"/>
</dbReference>
<dbReference type="Pfam" id="PF12072">
    <property type="entry name" value="RNase_Y_N"/>
    <property type="match status" value="1"/>
</dbReference>
<dbReference type="SMART" id="SM00471">
    <property type="entry name" value="HDc"/>
    <property type="match status" value="1"/>
</dbReference>
<dbReference type="SMART" id="SM00322">
    <property type="entry name" value="KH"/>
    <property type="match status" value="1"/>
</dbReference>
<dbReference type="SUPFAM" id="SSF54791">
    <property type="entry name" value="Eukaryotic type KH-domain (KH-domain type I)"/>
    <property type="match status" value="1"/>
</dbReference>
<dbReference type="SUPFAM" id="SSF109604">
    <property type="entry name" value="HD-domain/PDEase-like"/>
    <property type="match status" value="1"/>
</dbReference>
<dbReference type="PROSITE" id="PS51831">
    <property type="entry name" value="HD"/>
    <property type="match status" value="1"/>
</dbReference>
<dbReference type="PROSITE" id="PS50084">
    <property type="entry name" value="KH_TYPE_1"/>
    <property type="match status" value="1"/>
</dbReference>
<keyword id="KW-1003">Cell membrane</keyword>
<keyword id="KW-0255">Endonuclease</keyword>
<keyword id="KW-0378">Hydrolase</keyword>
<keyword id="KW-0472">Membrane</keyword>
<keyword id="KW-0540">Nuclease</keyword>
<keyword id="KW-0694">RNA-binding</keyword>
<keyword id="KW-0812">Transmembrane</keyword>
<keyword id="KW-1133">Transmembrane helix</keyword>
<feature type="chain" id="PRO_0000344829" description="Ribonuclease Y">
    <location>
        <begin position="1"/>
        <end position="509"/>
    </location>
</feature>
<feature type="transmembrane region" description="Helical" evidence="1">
    <location>
        <begin position="3"/>
        <end position="23"/>
    </location>
</feature>
<feature type="domain" description="KH" evidence="1">
    <location>
        <begin position="197"/>
        <end position="257"/>
    </location>
</feature>
<feature type="domain" description="HD" evidence="2">
    <location>
        <begin position="323"/>
        <end position="418"/>
    </location>
</feature>